<reference key="1">
    <citation type="journal article" date="2001" name="Brain Res. Mol. Brain Res.">
        <title>Cloning of the mouse 5-HT6 serotonin receptor and mutagenesis studies of the third cytoplasmic loop.</title>
        <authorList>
            <person name="Kohen R."/>
            <person name="Fashingbauer L.A."/>
            <person name="Heidmann D.E.A."/>
            <person name="Guthrie C.R."/>
            <person name="Hamblin M.W."/>
        </authorList>
    </citation>
    <scope>NUCLEOTIDE SEQUENCE [MRNA]</scope>
    <scope>FUNCTION</scope>
    <source>
        <strain>129/SvJ</strain>
        <tissue>Brain</tissue>
    </source>
</reference>
<reference key="2">
    <citation type="journal article" date="2012" name="EMBO Mol. Med.">
        <title>5-HT(6) receptor recruitment of mTOR as a mechanism for perturbed cognition in schizophrenia.</title>
        <authorList>
            <person name="Meffre J."/>
            <person name="Chaumont-Dubel S."/>
            <person name="Mannoury la Cour C."/>
            <person name="Loiseau F."/>
            <person name="Watson D.J."/>
            <person name="Dekeyne A."/>
            <person name="Seveno M."/>
            <person name="Rivet J.M."/>
            <person name="Gaven F."/>
            <person name="Deleris P."/>
            <person name="Herve D."/>
            <person name="Fone K.C."/>
            <person name="Bockaert J."/>
            <person name="Millan M.J."/>
            <person name="Marin P."/>
        </authorList>
    </citation>
    <scope>FUNCTION</scope>
    <scope>INTERACTION WITH MTOR</scope>
</reference>
<reference key="3">
    <citation type="journal article" date="2014" name="Development">
        <title>The serotonin 6 receptor controls neuronal migration during corticogenesis via a ligand-independent Cdk5-dependent mechanism.</title>
        <authorList>
            <person name="Jacobshagen M."/>
            <person name="Niquille M."/>
            <person name="Chaumont-Dubel S."/>
            <person name="Marin P."/>
            <person name="Dayer A."/>
        </authorList>
    </citation>
    <scope>FUNCTION</scope>
    <scope>INTERACTION WITH CDK5</scope>
</reference>
<gene>
    <name evidence="11" type="primary">Htr6</name>
</gene>
<keyword id="KW-1003">Cell membrane</keyword>
<keyword id="KW-1015">Disulfide bond</keyword>
<keyword id="KW-0297">G-protein coupled receptor</keyword>
<keyword id="KW-0325">Glycoprotein</keyword>
<keyword id="KW-0472">Membrane</keyword>
<keyword id="KW-0675">Receptor</keyword>
<keyword id="KW-1185">Reference proteome</keyword>
<keyword id="KW-0807">Transducer</keyword>
<keyword id="KW-0812">Transmembrane</keyword>
<keyword id="KW-1133">Transmembrane helix</keyword>
<comment type="function">
    <text evidence="1 2 6 7 8">G-protein coupled receptor for 5-hydroxytryptamine (serotonin), a biogenic hormone that functions as a neurotransmitter, a hormone and a mitogen (PubMed:11406289). Also has a high affinity for tricyclic psychotropic drugs (By similarity). Ligand binding causes a conformation change that triggers signaling via guanine nucleotide-binding proteins (G proteins) and modulates the activity of downstream effectors. HTR6 is coupled to G(s) G alpha proteins and mediates activation of adenylate cyclase activity (By similarity). Controls pyramidal neurons migration during corticogenesis, through the regulation of CDK5 activity (PubMed:25078650). Is an activator of mTOR signaling (PubMed:23027611).</text>
</comment>
<comment type="subunit">
    <text evidence="2 7 8">Interacts with CDK5 (PubMed:25078650). Interacts with MTOR (PubMed:23027611). Interacts with RPTOR and NF1 (By similarity).</text>
</comment>
<comment type="subcellular location">
    <subcellularLocation>
        <location evidence="2">Cell membrane</location>
        <topology evidence="4">Multi-pass membrane protein</topology>
    </subcellularLocation>
</comment>
<comment type="domain">
    <text evidence="3">Specificity for G(s) G alpha proteins is determined by the length of transmembrane regions 5 and 6 (TM5 and TM6).</text>
</comment>
<comment type="similarity">
    <text evidence="5">Belongs to the G-protein coupled receptor 1 family.</text>
</comment>
<sequence>MVPEPGPVNSSTPAWGPGPPPAPGGSGWVAAALCVVIVLTAAANSLLIALICTQPALRNTSNFFLVSLFTSDLMVGLVVMPPAMLNALYGRWVLARGLCLLWTAFDVMCCSASILNLCLISLDRYLLILSPLRYKLRMTAPRALALILGAWSLAALASFLPLLLGWHELGKARTSAPGQCRLLASLPYVLVASGVTFFLPSGAICFTYCRILLAARKQAVQVASLTTGTATAGQALETLQVPRTPRPGMESADSRRLTTKHSRKALKASLTLGILLSMFFVTWLPFFVASIAQAVCDCISPGLFDVLTWLGYCNSTMNPIIYPLFMRDFKRALGRFVPCVHCPPEHRASPASPSMWTSHSGARPGLSLQQVLPLPLPPNSDSDSASGGTSGLQLTAQLLLPGEATRDPPPPTRAPTVVNFFVTDSVEPEIRQHPLGSPMN</sequence>
<feature type="chain" id="PRO_0000068975" description="5-hydroxytryptamine receptor 6">
    <location>
        <begin position="1"/>
        <end position="440"/>
    </location>
</feature>
<feature type="topological domain" description="Extracellular" evidence="2">
    <location>
        <begin position="1"/>
        <end position="27"/>
    </location>
</feature>
<feature type="transmembrane region" description="Helical; Name=1" evidence="2">
    <location>
        <begin position="28"/>
        <end position="52"/>
    </location>
</feature>
<feature type="topological domain" description="Cytoplasmic" evidence="2">
    <location>
        <begin position="53"/>
        <end position="62"/>
    </location>
</feature>
<feature type="transmembrane region" description="Helical; Name=2" evidence="2">
    <location>
        <begin position="63"/>
        <end position="88"/>
    </location>
</feature>
<feature type="topological domain" description="Extracellular" evidence="2">
    <location>
        <begin position="89"/>
        <end position="96"/>
    </location>
</feature>
<feature type="transmembrane region" description="Helical; Name=3" evidence="2">
    <location>
        <begin position="97"/>
        <end position="122"/>
    </location>
</feature>
<feature type="topological domain" description="Cytoplasmic" evidence="2">
    <location>
        <begin position="123"/>
        <end position="142"/>
    </location>
</feature>
<feature type="transmembrane region" description="Helical; Name=4" evidence="2">
    <location>
        <begin position="143"/>
        <end position="167"/>
    </location>
</feature>
<feature type="topological domain" description="Extracellular" evidence="2">
    <location>
        <begin position="168"/>
        <end position="185"/>
    </location>
</feature>
<feature type="transmembrane region" description="Helical; Name=5" evidence="2">
    <location>
        <begin position="186"/>
        <end position="209"/>
    </location>
</feature>
<feature type="topological domain" description="Cytoplasmic" evidence="2">
    <location>
        <begin position="210"/>
        <end position="268"/>
    </location>
</feature>
<feature type="transmembrane region" description="Helical; Name=6" evidence="2">
    <location>
        <begin position="269"/>
        <end position="295"/>
    </location>
</feature>
<feature type="topological domain" description="Extracellular" evidence="2">
    <location>
        <begin position="296"/>
        <end position="301"/>
    </location>
</feature>
<feature type="transmembrane region" description="Helical; Name=7" evidence="2">
    <location>
        <begin position="302"/>
        <end position="325"/>
    </location>
</feature>
<feature type="topological domain" description="Cytoplasmic" evidence="2">
    <location>
        <begin position="326"/>
        <end position="440"/>
    </location>
</feature>
<feature type="binding site" evidence="2">
    <location>
        <position position="106"/>
    </location>
    <ligand>
        <name>serotonin</name>
        <dbReference type="ChEBI" id="CHEBI:350546"/>
    </ligand>
</feature>
<feature type="glycosylation site" description="N-linked (GlcNAc...) asparagine" evidence="4">
    <location>
        <position position="9"/>
    </location>
</feature>
<feature type="disulfide bond" evidence="5">
    <location>
        <begin position="99"/>
        <end position="180"/>
    </location>
</feature>
<protein>
    <recommendedName>
        <fullName evidence="10">5-hydroxytryptamine receptor 6</fullName>
        <shortName evidence="9">5-HT-6</shortName>
        <shortName evidence="9">5-HT6</shortName>
    </recommendedName>
    <alternativeName>
        <fullName evidence="9">Serotonin receptor 6</fullName>
    </alternativeName>
</protein>
<name>5HT6R_MOUSE</name>
<dbReference type="EMBL" id="AF134158">
    <property type="protein sequence ID" value="AAD46490.1"/>
    <property type="molecule type" value="mRNA"/>
</dbReference>
<dbReference type="CCDS" id="CCDS18838.1"/>
<dbReference type="RefSeq" id="NP_001364025.1">
    <property type="nucleotide sequence ID" value="NM_001377096.1"/>
</dbReference>
<dbReference type="RefSeq" id="NP_067333.1">
    <property type="nucleotide sequence ID" value="NM_021358.2"/>
</dbReference>
<dbReference type="RefSeq" id="XP_011248498.1">
    <property type="nucleotide sequence ID" value="XM_011250196.2"/>
</dbReference>
<dbReference type="SMR" id="Q9R1C8"/>
<dbReference type="BioGRID" id="200479">
    <property type="interactions" value="3"/>
</dbReference>
<dbReference type="CORUM" id="Q9R1C8"/>
<dbReference type="FunCoup" id="Q9R1C8">
    <property type="interactions" value="866"/>
</dbReference>
<dbReference type="STRING" id="10090.ENSMUSP00000101428"/>
<dbReference type="BindingDB" id="Q9R1C8"/>
<dbReference type="ChEMBL" id="CHEMBL1075268"/>
<dbReference type="GlyCosmos" id="Q9R1C8">
    <property type="glycosylation" value="1 site, No reported glycans"/>
</dbReference>
<dbReference type="GlyGen" id="Q9R1C8">
    <property type="glycosylation" value="1 site"/>
</dbReference>
<dbReference type="PhosphoSitePlus" id="Q9R1C8"/>
<dbReference type="PaxDb" id="10090-ENSMUSP00000101428"/>
<dbReference type="Antibodypedia" id="15009">
    <property type="antibodies" value="107 antibodies from 29 providers"/>
</dbReference>
<dbReference type="DNASU" id="15565"/>
<dbReference type="Ensembl" id="ENSMUST00000068036.2">
    <property type="protein sequence ID" value="ENSMUSP00000068333.2"/>
    <property type="gene ID" value="ENSMUSG00000028747.11"/>
</dbReference>
<dbReference type="Ensembl" id="ENSMUST00000105802.8">
    <property type="protein sequence ID" value="ENSMUSP00000101428.2"/>
    <property type="gene ID" value="ENSMUSG00000028747.11"/>
</dbReference>
<dbReference type="GeneID" id="15565"/>
<dbReference type="UCSC" id="uc008vlr.1">
    <property type="organism name" value="mouse"/>
</dbReference>
<dbReference type="AGR" id="MGI:1196627"/>
<dbReference type="CTD" id="3362"/>
<dbReference type="MGI" id="MGI:1196627">
    <property type="gene designation" value="Htr6"/>
</dbReference>
<dbReference type="VEuPathDB" id="HostDB:ENSMUSG00000028747"/>
<dbReference type="eggNOG" id="KOG3656">
    <property type="taxonomic scope" value="Eukaryota"/>
</dbReference>
<dbReference type="GeneTree" id="ENSGT01010000222287"/>
<dbReference type="HOGENOM" id="CLU_009579_11_0_1"/>
<dbReference type="InParanoid" id="Q9R1C8"/>
<dbReference type="OMA" id="KMGWHEL"/>
<dbReference type="OrthoDB" id="10018303at2759"/>
<dbReference type="PhylomeDB" id="Q9R1C8"/>
<dbReference type="TreeFam" id="TF351753"/>
<dbReference type="Reactome" id="R-MMU-390666">
    <property type="pathway name" value="Serotonin receptors"/>
</dbReference>
<dbReference type="Reactome" id="R-MMU-418555">
    <property type="pathway name" value="G alpha (s) signalling events"/>
</dbReference>
<dbReference type="BioGRID-ORCS" id="15565">
    <property type="hits" value="3 hits in 78 CRISPR screens"/>
</dbReference>
<dbReference type="PRO" id="PR:Q9R1C8"/>
<dbReference type="Proteomes" id="UP000000589">
    <property type="component" value="Chromosome 4"/>
</dbReference>
<dbReference type="RNAct" id="Q9R1C8">
    <property type="molecule type" value="protein"/>
</dbReference>
<dbReference type="Bgee" id="ENSMUSG00000028747">
    <property type="expression patterns" value="Expressed in cerebral cortex subventricular zone and 22 other cell types or tissues"/>
</dbReference>
<dbReference type="ExpressionAtlas" id="Q9R1C8">
    <property type="expression patterns" value="baseline and differential"/>
</dbReference>
<dbReference type="GO" id="GO:0005929">
    <property type="term" value="C:cilium"/>
    <property type="evidence" value="ECO:0000314"/>
    <property type="project" value="MGI"/>
</dbReference>
<dbReference type="GO" id="GO:0005886">
    <property type="term" value="C:plasma membrane"/>
    <property type="evidence" value="ECO:0000250"/>
    <property type="project" value="UniProtKB"/>
</dbReference>
<dbReference type="GO" id="GO:0004993">
    <property type="term" value="F:G protein-coupled serotonin receptor activity"/>
    <property type="evidence" value="ECO:0000314"/>
    <property type="project" value="UniProtKB"/>
</dbReference>
<dbReference type="GO" id="GO:0099589">
    <property type="term" value="F:serotonin receptor activity"/>
    <property type="evidence" value="ECO:0007669"/>
    <property type="project" value="Ensembl"/>
</dbReference>
<dbReference type="GO" id="GO:0007192">
    <property type="term" value="P:adenylate cyclase-activating serotonin receptor signaling pathway"/>
    <property type="evidence" value="ECO:0000250"/>
    <property type="project" value="UniProtKB"/>
</dbReference>
<dbReference type="GO" id="GO:0021795">
    <property type="term" value="P:cerebral cortex cell migration"/>
    <property type="evidence" value="ECO:0000315"/>
    <property type="project" value="UniProtKB"/>
</dbReference>
<dbReference type="GO" id="GO:0032008">
    <property type="term" value="P:positive regulation of TOR signaling"/>
    <property type="evidence" value="ECO:0000314"/>
    <property type="project" value="UniProtKB"/>
</dbReference>
<dbReference type="CDD" id="cd15054">
    <property type="entry name" value="7tmA_5-HT6"/>
    <property type="match status" value="1"/>
</dbReference>
<dbReference type="FunFam" id="1.20.1070.10:FF:000148">
    <property type="entry name" value="5-hydroxytryptamine receptor 6"/>
    <property type="match status" value="1"/>
</dbReference>
<dbReference type="Gene3D" id="1.20.1070.10">
    <property type="entry name" value="Rhodopsin 7-helix transmembrane proteins"/>
    <property type="match status" value="1"/>
</dbReference>
<dbReference type="InterPro" id="IPR002232">
    <property type="entry name" value="5HT6_rcpt"/>
</dbReference>
<dbReference type="InterPro" id="IPR000276">
    <property type="entry name" value="GPCR_Rhodpsn"/>
</dbReference>
<dbReference type="InterPro" id="IPR017452">
    <property type="entry name" value="GPCR_Rhodpsn_7TM"/>
</dbReference>
<dbReference type="PANTHER" id="PTHR24247">
    <property type="entry name" value="5-HYDROXYTRYPTAMINE RECEPTOR"/>
    <property type="match status" value="1"/>
</dbReference>
<dbReference type="PANTHER" id="PTHR24247:SF236">
    <property type="entry name" value="5-HYDROXYTRYPTAMINE RECEPTOR 6"/>
    <property type="match status" value="1"/>
</dbReference>
<dbReference type="Pfam" id="PF00001">
    <property type="entry name" value="7tm_1"/>
    <property type="match status" value="1"/>
</dbReference>
<dbReference type="PRINTS" id="PR01102">
    <property type="entry name" value="5HT6RECEPTR"/>
</dbReference>
<dbReference type="PRINTS" id="PR00237">
    <property type="entry name" value="GPCRRHODOPSN"/>
</dbReference>
<dbReference type="SMART" id="SM01381">
    <property type="entry name" value="7TM_GPCR_Srsx"/>
    <property type="match status" value="1"/>
</dbReference>
<dbReference type="SUPFAM" id="SSF81321">
    <property type="entry name" value="Family A G protein-coupled receptor-like"/>
    <property type="match status" value="1"/>
</dbReference>
<dbReference type="PROSITE" id="PS00237">
    <property type="entry name" value="G_PROTEIN_RECEP_F1_1"/>
    <property type="match status" value="1"/>
</dbReference>
<dbReference type="PROSITE" id="PS50262">
    <property type="entry name" value="G_PROTEIN_RECEP_F1_2"/>
    <property type="match status" value="1"/>
</dbReference>
<organism>
    <name type="scientific">Mus musculus</name>
    <name type="common">Mouse</name>
    <dbReference type="NCBI Taxonomy" id="10090"/>
    <lineage>
        <taxon>Eukaryota</taxon>
        <taxon>Metazoa</taxon>
        <taxon>Chordata</taxon>
        <taxon>Craniata</taxon>
        <taxon>Vertebrata</taxon>
        <taxon>Euteleostomi</taxon>
        <taxon>Mammalia</taxon>
        <taxon>Eutheria</taxon>
        <taxon>Euarchontoglires</taxon>
        <taxon>Glires</taxon>
        <taxon>Rodentia</taxon>
        <taxon>Myomorpha</taxon>
        <taxon>Muroidea</taxon>
        <taxon>Muridae</taxon>
        <taxon>Murinae</taxon>
        <taxon>Mus</taxon>
        <taxon>Mus</taxon>
    </lineage>
</organism>
<evidence type="ECO:0000250" key="1">
    <source>
        <dbReference type="UniProtKB" id="P31388"/>
    </source>
</evidence>
<evidence type="ECO:0000250" key="2">
    <source>
        <dbReference type="UniProtKB" id="P50406"/>
    </source>
</evidence>
<evidence type="ECO:0000250" key="3">
    <source>
        <dbReference type="UniProtKB" id="Q13639"/>
    </source>
</evidence>
<evidence type="ECO:0000255" key="4"/>
<evidence type="ECO:0000255" key="5">
    <source>
        <dbReference type="PROSITE-ProRule" id="PRU00521"/>
    </source>
</evidence>
<evidence type="ECO:0000269" key="6">
    <source>
    </source>
</evidence>
<evidence type="ECO:0000269" key="7">
    <source>
    </source>
</evidence>
<evidence type="ECO:0000269" key="8">
    <source>
    </source>
</evidence>
<evidence type="ECO:0000303" key="9">
    <source>
    </source>
</evidence>
<evidence type="ECO:0000305" key="10"/>
<evidence type="ECO:0000312" key="11">
    <source>
        <dbReference type="MGI" id="MGI:1196627"/>
    </source>
</evidence>
<accession>Q9R1C8</accession>
<proteinExistence type="evidence at protein level"/>